<name>RS8_METS3</name>
<accession>A5UL73</accession>
<keyword id="KW-0687">Ribonucleoprotein</keyword>
<keyword id="KW-0689">Ribosomal protein</keyword>
<keyword id="KW-0694">RNA-binding</keyword>
<keyword id="KW-0699">rRNA-binding</keyword>
<dbReference type="EMBL" id="CP000678">
    <property type="protein sequence ID" value="ABQ86951.1"/>
    <property type="molecule type" value="Genomic_DNA"/>
</dbReference>
<dbReference type="RefSeq" id="WP_004033225.1">
    <property type="nucleotide sequence ID" value="NZ_CP117965.1"/>
</dbReference>
<dbReference type="SMR" id="A5UL73"/>
<dbReference type="STRING" id="420247.Msm_0746"/>
<dbReference type="EnsemblBacteria" id="ABQ86951">
    <property type="protein sequence ID" value="ABQ86951"/>
    <property type="gene ID" value="Msm_0746"/>
</dbReference>
<dbReference type="KEGG" id="msi:Msm_0746"/>
<dbReference type="PATRIC" id="fig|420247.28.peg.743"/>
<dbReference type="eggNOG" id="arCOG04091">
    <property type="taxonomic scope" value="Archaea"/>
</dbReference>
<dbReference type="HOGENOM" id="CLU_098428_1_1_2"/>
<dbReference type="Proteomes" id="UP000001992">
    <property type="component" value="Chromosome"/>
</dbReference>
<dbReference type="GO" id="GO:1990904">
    <property type="term" value="C:ribonucleoprotein complex"/>
    <property type="evidence" value="ECO:0007669"/>
    <property type="project" value="UniProtKB-KW"/>
</dbReference>
<dbReference type="GO" id="GO:0005840">
    <property type="term" value="C:ribosome"/>
    <property type="evidence" value="ECO:0007669"/>
    <property type="project" value="UniProtKB-KW"/>
</dbReference>
<dbReference type="GO" id="GO:0019843">
    <property type="term" value="F:rRNA binding"/>
    <property type="evidence" value="ECO:0007669"/>
    <property type="project" value="UniProtKB-UniRule"/>
</dbReference>
<dbReference type="GO" id="GO:0003735">
    <property type="term" value="F:structural constituent of ribosome"/>
    <property type="evidence" value="ECO:0007669"/>
    <property type="project" value="InterPro"/>
</dbReference>
<dbReference type="GO" id="GO:0006412">
    <property type="term" value="P:translation"/>
    <property type="evidence" value="ECO:0007669"/>
    <property type="project" value="UniProtKB-UniRule"/>
</dbReference>
<dbReference type="FunFam" id="3.30.1370.30:FF:000001">
    <property type="entry name" value="40S ribosomal protein S15a"/>
    <property type="match status" value="1"/>
</dbReference>
<dbReference type="FunFam" id="3.30.1490.10:FF:000002">
    <property type="entry name" value="40S ribosomal protein S15a"/>
    <property type="match status" value="1"/>
</dbReference>
<dbReference type="Gene3D" id="3.30.1370.30">
    <property type="match status" value="1"/>
</dbReference>
<dbReference type="Gene3D" id="3.30.1490.10">
    <property type="match status" value="1"/>
</dbReference>
<dbReference type="HAMAP" id="MF_01302_A">
    <property type="entry name" value="Ribosomal_uS8_A"/>
    <property type="match status" value="1"/>
</dbReference>
<dbReference type="InterPro" id="IPR000630">
    <property type="entry name" value="Ribosomal_uS8"/>
</dbReference>
<dbReference type="InterPro" id="IPR047863">
    <property type="entry name" value="Ribosomal_uS8_CS"/>
</dbReference>
<dbReference type="InterPro" id="IPR035987">
    <property type="entry name" value="Ribosomal_uS8_sf"/>
</dbReference>
<dbReference type="NCBIfam" id="NF003115">
    <property type="entry name" value="PRK04034.1"/>
    <property type="match status" value="1"/>
</dbReference>
<dbReference type="PANTHER" id="PTHR11758">
    <property type="entry name" value="40S RIBOSOMAL PROTEIN S15A"/>
    <property type="match status" value="1"/>
</dbReference>
<dbReference type="Pfam" id="PF00410">
    <property type="entry name" value="Ribosomal_S8"/>
    <property type="match status" value="1"/>
</dbReference>
<dbReference type="SUPFAM" id="SSF56047">
    <property type="entry name" value="Ribosomal protein S8"/>
    <property type="match status" value="1"/>
</dbReference>
<dbReference type="PROSITE" id="PS00053">
    <property type="entry name" value="RIBOSOMAL_S8"/>
    <property type="match status" value="1"/>
</dbReference>
<proteinExistence type="inferred from homology"/>
<reference key="1">
    <citation type="journal article" date="2007" name="Proc. Natl. Acad. Sci. U.S.A.">
        <title>Genomic and metabolic adaptations of Methanobrevibacter smithii to the human gut.</title>
        <authorList>
            <person name="Samuel B.S."/>
            <person name="Hansen E.E."/>
            <person name="Manchester J.K."/>
            <person name="Coutinho P.M."/>
            <person name="Henrissat B."/>
            <person name="Fulton R."/>
            <person name="Latreille P."/>
            <person name="Kim K."/>
            <person name="Wilson R.K."/>
            <person name="Gordon J.I."/>
        </authorList>
    </citation>
    <scope>NUCLEOTIDE SEQUENCE [LARGE SCALE GENOMIC DNA]</scope>
    <source>
        <strain>ATCC 35061 / DSM 861 / OCM 144 / PS</strain>
    </source>
</reference>
<organism>
    <name type="scientific">Methanobrevibacter smithii (strain ATCC 35061 / DSM 861 / OCM 144 / PS)</name>
    <dbReference type="NCBI Taxonomy" id="420247"/>
    <lineage>
        <taxon>Archaea</taxon>
        <taxon>Methanobacteriati</taxon>
        <taxon>Methanobacteriota</taxon>
        <taxon>Methanomada group</taxon>
        <taxon>Methanobacteria</taxon>
        <taxon>Methanobacteriales</taxon>
        <taxon>Methanobacteriaceae</taxon>
        <taxon>Methanobrevibacter</taxon>
    </lineage>
</organism>
<gene>
    <name evidence="1" type="primary">rps8</name>
    <name type="ordered locus">Msm_0746</name>
</gene>
<feature type="chain" id="PRO_0000305764" description="Small ribosomal subunit protein uS8">
    <location>
        <begin position="1"/>
        <end position="130"/>
    </location>
</feature>
<comment type="function">
    <text evidence="1">One of the primary rRNA binding proteins, it binds directly to 16S rRNA central domain where it helps coordinate assembly of the platform of the 30S subunit.</text>
</comment>
<comment type="subunit">
    <text evidence="1">Part of the 30S ribosomal subunit.</text>
</comment>
<comment type="similarity">
    <text evidence="1">Belongs to the universal ribosomal protein uS8 family.</text>
</comment>
<sequence>MSLMDPLADALTNIRNNELQVKDSCVISPASKLIGEVLSTMQKENYIGNFEYIDDNRAGQFKVELEGNINKCGVIKPRHAVKKDEFEKFEKRYLPAKNFGILIVTTPEGIMTHYEAKERGIGGRLLAYMY</sequence>
<protein>
    <recommendedName>
        <fullName evidence="1">Small ribosomal subunit protein uS8</fullName>
    </recommendedName>
    <alternativeName>
        <fullName evidence="2">30S ribosomal protein S8</fullName>
    </alternativeName>
</protein>
<evidence type="ECO:0000255" key="1">
    <source>
        <dbReference type="HAMAP-Rule" id="MF_01302"/>
    </source>
</evidence>
<evidence type="ECO:0000305" key="2"/>